<name>RL13_NITMU</name>
<reference key="1">
    <citation type="submission" date="2005-08" db="EMBL/GenBank/DDBJ databases">
        <title>Complete sequence of chromosome 1 of Nitrosospira multiformis ATCC 25196.</title>
        <authorList>
            <person name="Copeland A."/>
            <person name="Lucas S."/>
            <person name="Lapidus A."/>
            <person name="Barry K."/>
            <person name="Detter J.C."/>
            <person name="Glavina T."/>
            <person name="Hammon N."/>
            <person name="Israni S."/>
            <person name="Pitluck S."/>
            <person name="Chain P."/>
            <person name="Malfatti S."/>
            <person name="Shin M."/>
            <person name="Vergez L."/>
            <person name="Schmutz J."/>
            <person name="Larimer F."/>
            <person name="Land M."/>
            <person name="Hauser L."/>
            <person name="Kyrpides N."/>
            <person name="Lykidis A."/>
            <person name="Richardson P."/>
        </authorList>
    </citation>
    <scope>NUCLEOTIDE SEQUENCE [LARGE SCALE GENOMIC DNA]</scope>
    <source>
        <strain>ATCC 25196 / NCIMB 11849 / C 71</strain>
    </source>
</reference>
<sequence length="144" mass="16119">MKTFSAKPHEVNREWFVIDAAGKVLGRLAAEIAHRLRGKHKPIYTPHVDTGDFIVVINVDKMRVTGNKAESKMYYRHSGYPGGIYETSFAKMHARFPGRPLEKAVKGMLPKGPLGYAMLKKLKIYAGAAHPHAAQQPRQLEVRA</sequence>
<proteinExistence type="inferred from homology"/>
<comment type="function">
    <text evidence="1">This protein is one of the early assembly proteins of the 50S ribosomal subunit, although it is not seen to bind rRNA by itself. It is important during the early stages of 50S assembly.</text>
</comment>
<comment type="subunit">
    <text evidence="1">Part of the 50S ribosomal subunit.</text>
</comment>
<comment type="similarity">
    <text evidence="1">Belongs to the universal ribosomal protein uL13 family.</text>
</comment>
<feature type="chain" id="PRO_0000261758" description="Large ribosomal subunit protein uL13">
    <location>
        <begin position="1"/>
        <end position="144"/>
    </location>
</feature>
<gene>
    <name evidence="1" type="primary">rplM</name>
    <name type="ordered locus">Nmul_A0561</name>
</gene>
<protein>
    <recommendedName>
        <fullName evidence="1">Large ribosomal subunit protein uL13</fullName>
    </recommendedName>
    <alternativeName>
        <fullName evidence="2">50S ribosomal protein L13</fullName>
    </alternativeName>
</protein>
<dbReference type="EMBL" id="CP000103">
    <property type="protein sequence ID" value="ABB73869.1"/>
    <property type="molecule type" value="Genomic_DNA"/>
</dbReference>
<dbReference type="RefSeq" id="WP_011379923.1">
    <property type="nucleotide sequence ID" value="NC_007614.1"/>
</dbReference>
<dbReference type="SMR" id="Q2YBK2"/>
<dbReference type="STRING" id="323848.Nmul_A0561"/>
<dbReference type="KEGG" id="nmu:Nmul_A0561"/>
<dbReference type="eggNOG" id="COG0102">
    <property type="taxonomic scope" value="Bacteria"/>
</dbReference>
<dbReference type="HOGENOM" id="CLU_082184_2_2_4"/>
<dbReference type="OrthoDB" id="9801330at2"/>
<dbReference type="Proteomes" id="UP000002718">
    <property type="component" value="Chromosome"/>
</dbReference>
<dbReference type="GO" id="GO:0022625">
    <property type="term" value="C:cytosolic large ribosomal subunit"/>
    <property type="evidence" value="ECO:0007669"/>
    <property type="project" value="TreeGrafter"/>
</dbReference>
<dbReference type="GO" id="GO:0003729">
    <property type="term" value="F:mRNA binding"/>
    <property type="evidence" value="ECO:0007669"/>
    <property type="project" value="TreeGrafter"/>
</dbReference>
<dbReference type="GO" id="GO:0003735">
    <property type="term" value="F:structural constituent of ribosome"/>
    <property type="evidence" value="ECO:0007669"/>
    <property type="project" value="InterPro"/>
</dbReference>
<dbReference type="GO" id="GO:0017148">
    <property type="term" value="P:negative regulation of translation"/>
    <property type="evidence" value="ECO:0007669"/>
    <property type="project" value="TreeGrafter"/>
</dbReference>
<dbReference type="GO" id="GO:0006412">
    <property type="term" value="P:translation"/>
    <property type="evidence" value="ECO:0007669"/>
    <property type="project" value="UniProtKB-UniRule"/>
</dbReference>
<dbReference type="CDD" id="cd00392">
    <property type="entry name" value="Ribosomal_L13"/>
    <property type="match status" value="1"/>
</dbReference>
<dbReference type="FunFam" id="3.90.1180.10:FF:000001">
    <property type="entry name" value="50S ribosomal protein L13"/>
    <property type="match status" value="1"/>
</dbReference>
<dbReference type="Gene3D" id="3.90.1180.10">
    <property type="entry name" value="Ribosomal protein L13"/>
    <property type="match status" value="1"/>
</dbReference>
<dbReference type="HAMAP" id="MF_01366">
    <property type="entry name" value="Ribosomal_uL13"/>
    <property type="match status" value="1"/>
</dbReference>
<dbReference type="InterPro" id="IPR005822">
    <property type="entry name" value="Ribosomal_uL13"/>
</dbReference>
<dbReference type="InterPro" id="IPR005823">
    <property type="entry name" value="Ribosomal_uL13_bac-type"/>
</dbReference>
<dbReference type="InterPro" id="IPR036899">
    <property type="entry name" value="Ribosomal_uL13_sf"/>
</dbReference>
<dbReference type="NCBIfam" id="TIGR01066">
    <property type="entry name" value="rplM_bact"/>
    <property type="match status" value="1"/>
</dbReference>
<dbReference type="PANTHER" id="PTHR11545:SF2">
    <property type="entry name" value="LARGE RIBOSOMAL SUBUNIT PROTEIN UL13M"/>
    <property type="match status" value="1"/>
</dbReference>
<dbReference type="PANTHER" id="PTHR11545">
    <property type="entry name" value="RIBOSOMAL PROTEIN L13"/>
    <property type="match status" value="1"/>
</dbReference>
<dbReference type="Pfam" id="PF00572">
    <property type="entry name" value="Ribosomal_L13"/>
    <property type="match status" value="1"/>
</dbReference>
<dbReference type="PIRSF" id="PIRSF002181">
    <property type="entry name" value="Ribosomal_L13"/>
    <property type="match status" value="1"/>
</dbReference>
<dbReference type="SUPFAM" id="SSF52161">
    <property type="entry name" value="Ribosomal protein L13"/>
    <property type="match status" value="1"/>
</dbReference>
<keyword id="KW-1185">Reference proteome</keyword>
<keyword id="KW-0687">Ribonucleoprotein</keyword>
<keyword id="KW-0689">Ribosomal protein</keyword>
<evidence type="ECO:0000255" key="1">
    <source>
        <dbReference type="HAMAP-Rule" id="MF_01366"/>
    </source>
</evidence>
<evidence type="ECO:0000305" key="2"/>
<organism>
    <name type="scientific">Nitrosospira multiformis (strain ATCC 25196 / NCIMB 11849 / C 71)</name>
    <dbReference type="NCBI Taxonomy" id="323848"/>
    <lineage>
        <taxon>Bacteria</taxon>
        <taxon>Pseudomonadati</taxon>
        <taxon>Pseudomonadota</taxon>
        <taxon>Betaproteobacteria</taxon>
        <taxon>Nitrosomonadales</taxon>
        <taxon>Nitrosomonadaceae</taxon>
        <taxon>Nitrosospira</taxon>
    </lineage>
</organism>
<accession>Q2YBK2</accession>